<dbReference type="EC" id="3.1.1.29" evidence="1"/>
<dbReference type="EMBL" id="CP001393">
    <property type="protein sequence ID" value="ACM59761.1"/>
    <property type="molecule type" value="Genomic_DNA"/>
</dbReference>
<dbReference type="RefSeq" id="WP_015907210.1">
    <property type="nucleotide sequence ID" value="NC_012034.1"/>
</dbReference>
<dbReference type="SMR" id="B9MPK0"/>
<dbReference type="STRING" id="521460.Athe_0637"/>
<dbReference type="GeneID" id="31771991"/>
<dbReference type="KEGG" id="ate:Athe_0637"/>
<dbReference type="eggNOG" id="COG0193">
    <property type="taxonomic scope" value="Bacteria"/>
</dbReference>
<dbReference type="HOGENOM" id="CLU_062456_4_1_9"/>
<dbReference type="Proteomes" id="UP000007723">
    <property type="component" value="Chromosome"/>
</dbReference>
<dbReference type="GO" id="GO:0005737">
    <property type="term" value="C:cytoplasm"/>
    <property type="evidence" value="ECO:0007669"/>
    <property type="project" value="UniProtKB-SubCell"/>
</dbReference>
<dbReference type="GO" id="GO:0004045">
    <property type="term" value="F:peptidyl-tRNA hydrolase activity"/>
    <property type="evidence" value="ECO:0007669"/>
    <property type="project" value="UniProtKB-UniRule"/>
</dbReference>
<dbReference type="GO" id="GO:0000049">
    <property type="term" value="F:tRNA binding"/>
    <property type="evidence" value="ECO:0007669"/>
    <property type="project" value="UniProtKB-UniRule"/>
</dbReference>
<dbReference type="GO" id="GO:0006515">
    <property type="term" value="P:protein quality control for misfolded or incompletely synthesized proteins"/>
    <property type="evidence" value="ECO:0007669"/>
    <property type="project" value="UniProtKB-UniRule"/>
</dbReference>
<dbReference type="GO" id="GO:0072344">
    <property type="term" value="P:rescue of stalled ribosome"/>
    <property type="evidence" value="ECO:0007669"/>
    <property type="project" value="UniProtKB-UniRule"/>
</dbReference>
<dbReference type="CDD" id="cd00462">
    <property type="entry name" value="PTH"/>
    <property type="match status" value="1"/>
</dbReference>
<dbReference type="FunFam" id="3.40.50.1470:FF:000001">
    <property type="entry name" value="Peptidyl-tRNA hydrolase"/>
    <property type="match status" value="1"/>
</dbReference>
<dbReference type="Gene3D" id="3.40.50.1470">
    <property type="entry name" value="Peptidyl-tRNA hydrolase"/>
    <property type="match status" value="1"/>
</dbReference>
<dbReference type="HAMAP" id="MF_00083">
    <property type="entry name" value="Pept_tRNA_hydro_bact"/>
    <property type="match status" value="1"/>
</dbReference>
<dbReference type="InterPro" id="IPR001328">
    <property type="entry name" value="Pept_tRNA_hydro"/>
</dbReference>
<dbReference type="InterPro" id="IPR018171">
    <property type="entry name" value="Pept_tRNA_hydro_CS"/>
</dbReference>
<dbReference type="InterPro" id="IPR036416">
    <property type="entry name" value="Pept_tRNA_hydro_sf"/>
</dbReference>
<dbReference type="NCBIfam" id="TIGR00447">
    <property type="entry name" value="pth"/>
    <property type="match status" value="1"/>
</dbReference>
<dbReference type="PANTHER" id="PTHR17224">
    <property type="entry name" value="PEPTIDYL-TRNA HYDROLASE"/>
    <property type="match status" value="1"/>
</dbReference>
<dbReference type="PANTHER" id="PTHR17224:SF1">
    <property type="entry name" value="PEPTIDYL-TRNA HYDROLASE"/>
    <property type="match status" value="1"/>
</dbReference>
<dbReference type="Pfam" id="PF01195">
    <property type="entry name" value="Pept_tRNA_hydro"/>
    <property type="match status" value="1"/>
</dbReference>
<dbReference type="SUPFAM" id="SSF53178">
    <property type="entry name" value="Peptidyl-tRNA hydrolase-like"/>
    <property type="match status" value="1"/>
</dbReference>
<dbReference type="PROSITE" id="PS01195">
    <property type="entry name" value="PEPT_TRNA_HYDROL_1"/>
    <property type="match status" value="1"/>
</dbReference>
<dbReference type="PROSITE" id="PS01196">
    <property type="entry name" value="PEPT_TRNA_HYDROL_2"/>
    <property type="match status" value="1"/>
</dbReference>
<sequence length="189" mass="21252">MDYIITGLGNPGERYTFTRHNAGFLAIDYLAQFFNTKVDKIKFKGLVGSFEYAGKKVLLLKPMTYMNASGESIIEAVNFYKIKPEKLIVIYDDIAFDVGVVKMRKKGSDGGHNGIKSIIQCLGTEEFPRIRIGIGVPKYDMVKYVLSEFEDGEKEKIFRAIEKASNGIKILLESDIDRAMNYINGDVVV</sequence>
<name>PTH_CALBD</name>
<gene>
    <name evidence="1" type="primary">pth</name>
    <name type="ordered locus">Athe_0637</name>
</gene>
<feature type="chain" id="PRO_1000192954" description="Peptidyl-tRNA hydrolase">
    <location>
        <begin position="1"/>
        <end position="189"/>
    </location>
</feature>
<feature type="active site" description="Proton acceptor" evidence="1">
    <location>
        <position position="20"/>
    </location>
</feature>
<feature type="binding site" evidence="1">
    <location>
        <position position="15"/>
    </location>
    <ligand>
        <name>tRNA</name>
        <dbReference type="ChEBI" id="CHEBI:17843"/>
    </ligand>
</feature>
<feature type="binding site" evidence="1">
    <location>
        <position position="65"/>
    </location>
    <ligand>
        <name>tRNA</name>
        <dbReference type="ChEBI" id="CHEBI:17843"/>
    </ligand>
</feature>
<feature type="binding site" evidence="1">
    <location>
        <position position="67"/>
    </location>
    <ligand>
        <name>tRNA</name>
        <dbReference type="ChEBI" id="CHEBI:17843"/>
    </ligand>
</feature>
<feature type="binding site" evidence="1">
    <location>
        <position position="113"/>
    </location>
    <ligand>
        <name>tRNA</name>
        <dbReference type="ChEBI" id="CHEBI:17843"/>
    </ligand>
</feature>
<feature type="site" description="Discriminates between blocked and unblocked aminoacyl-tRNA" evidence="1">
    <location>
        <position position="10"/>
    </location>
</feature>
<feature type="site" description="Stabilizes the basic form of H active site to accept a proton" evidence="1">
    <location>
        <position position="92"/>
    </location>
</feature>
<keyword id="KW-0963">Cytoplasm</keyword>
<keyword id="KW-0378">Hydrolase</keyword>
<keyword id="KW-0694">RNA-binding</keyword>
<keyword id="KW-0820">tRNA-binding</keyword>
<evidence type="ECO:0000255" key="1">
    <source>
        <dbReference type="HAMAP-Rule" id="MF_00083"/>
    </source>
</evidence>
<comment type="function">
    <text evidence="1">Hydrolyzes ribosome-free peptidyl-tRNAs (with 1 or more amino acids incorporated), which drop off the ribosome during protein synthesis, or as a result of ribosome stalling.</text>
</comment>
<comment type="function">
    <text evidence="1">Catalyzes the release of premature peptidyl moieties from peptidyl-tRNA molecules trapped in stalled 50S ribosomal subunits, and thus maintains levels of free tRNAs and 50S ribosomes.</text>
</comment>
<comment type="catalytic activity">
    <reaction evidence="1">
        <text>an N-acyl-L-alpha-aminoacyl-tRNA + H2O = an N-acyl-L-amino acid + a tRNA + H(+)</text>
        <dbReference type="Rhea" id="RHEA:54448"/>
        <dbReference type="Rhea" id="RHEA-COMP:10123"/>
        <dbReference type="Rhea" id="RHEA-COMP:13883"/>
        <dbReference type="ChEBI" id="CHEBI:15377"/>
        <dbReference type="ChEBI" id="CHEBI:15378"/>
        <dbReference type="ChEBI" id="CHEBI:59874"/>
        <dbReference type="ChEBI" id="CHEBI:78442"/>
        <dbReference type="ChEBI" id="CHEBI:138191"/>
        <dbReference type="EC" id="3.1.1.29"/>
    </reaction>
</comment>
<comment type="subunit">
    <text evidence="1">Monomer.</text>
</comment>
<comment type="subcellular location">
    <subcellularLocation>
        <location evidence="1">Cytoplasm</location>
    </subcellularLocation>
</comment>
<comment type="similarity">
    <text evidence="1">Belongs to the PTH family.</text>
</comment>
<organism>
    <name type="scientific">Caldicellulosiruptor bescii (strain ATCC BAA-1888 / DSM 6725 / KCTC 15123 / Z-1320)</name>
    <name type="common">Anaerocellum thermophilum</name>
    <dbReference type="NCBI Taxonomy" id="521460"/>
    <lineage>
        <taxon>Bacteria</taxon>
        <taxon>Bacillati</taxon>
        <taxon>Bacillota</taxon>
        <taxon>Bacillota incertae sedis</taxon>
        <taxon>Caldicellulosiruptorales</taxon>
        <taxon>Caldicellulosiruptoraceae</taxon>
        <taxon>Caldicellulosiruptor</taxon>
    </lineage>
</organism>
<protein>
    <recommendedName>
        <fullName evidence="1">Peptidyl-tRNA hydrolase</fullName>
        <shortName evidence="1">Pth</shortName>
        <ecNumber evidence="1">3.1.1.29</ecNumber>
    </recommendedName>
</protein>
<reference key="1">
    <citation type="submission" date="2009-01" db="EMBL/GenBank/DDBJ databases">
        <title>Complete sequence of chromosome of Caldicellulosiruptor becscii DSM 6725.</title>
        <authorList>
            <person name="Lucas S."/>
            <person name="Copeland A."/>
            <person name="Lapidus A."/>
            <person name="Glavina del Rio T."/>
            <person name="Tice H."/>
            <person name="Bruce D."/>
            <person name="Goodwin L."/>
            <person name="Pitluck S."/>
            <person name="Sims D."/>
            <person name="Meincke L."/>
            <person name="Brettin T."/>
            <person name="Detter J.C."/>
            <person name="Han C."/>
            <person name="Larimer F."/>
            <person name="Land M."/>
            <person name="Hauser L."/>
            <person name="Kyrpides N."/>
            <person name="Ovchinnikova G."/>
            <person name="Kataeva I."/>
            <person name="Adams M.W.W."/>
        </authorList>
    </citation>
    <scope>NUCLEOTIDE SEQUENCE [LARGE SCALE GENOMIC DNA]</scope>
    <source>
        <strain>ATCC BAA-1888 / DSM 6725 / KCTC 15123 / Z-1320</strain>
    </source>
</reference>
<proteinExistence type="inferred from homology"/>
<accession>B9MPK0</accession>